<gene>
    <name evidence="34 38" type="primary">Ninj1</name>
</gene>
<feature type="chain" id="PRO_0000159644" description="Ninjurin-1">
    <location>
        <begin position="1"/>
        <end position="152"/>
    </location>
</feature>
<feature type="chain" id="PRO_0000452825" description="Secreted ninjurin-1" evidence="37">
    <location>
        <begin position="1"/>
        <end position="56"/>
    </location>
</feature>
<feature type="topological domain" description="Extracellular" evidence="2">
    <location>
        <begin position="1"/>
        <end position="78"/>
    </location>
</feature>
<feature type="transmembrane region" description="Helical; Name=Helix alpha3" evidence="30 39">
    <location>
        <begin position="79"/>
        <end position="103"/>
    </location>
</feature>
<feature type="topological domain" description="Cytoplasmic" evidence="2">
    <location>
        <begin position="104"/>
        <end position="113"/>
    </location>
</feature>
<feature type="transmembrane region" description="Helical; Name=Helix alpha4" evidence="30 39">
    <location>
        <begin position="114"/>
        <end position="138"/>
    </location>
</feature>
<feature type="topological domain" description="Extracellular" evidence="2">
    <location>
        <begin position="139"/>
        <end position="152"/>
    </location>
</feature>
<feature type="region of interest" description="Disordered" evidence="5">
    <location>
        <begin position="1"/>
        <end position="29"/>
    </location>
</feature>
<feature type="region of interest" description="N-terminal adhesion motif" evidence="2">
    <location>
        <begin position="26"/>
        <end position="37"/>
    </location>
</feature>
<feature type="region of interest" description="Required to induce plasma membrane rupture" evidence="23">
    <location>
        <begin position="40"/>
        <end position="69"/>
    </location>
</feature>
<feature type="region of interest" description="Helix alpha1" evidence="2">
    <location>
        <begin position="44"/>
        <end position="55"/>
    </location>
</feature>
<feature type="region of interest" description="Helix alpha2" evidence="2">
    <location>
        <begin position="58"/>
        <end position="74"/>
    </location>
</feature>
<feature type="compositionally biased region" description="Acidic residues" evidence="5">
    <location>
        <begin position="1"/>
        <end position="10"/>
    </location>
</feature>
<feature type="site" description="Cleavage; by MMP9" evidence="7">
    <location>
        <begin position="56"/>
        <end position="57"/>
    </location>
</feature>
<feature type="modified residue" description="N-acetylmethionine" evidence="2">
    <location>
        <position position="1"/>
    </location>
</feature>
<feature type="modified residue" description="Phosphoserine" evidence="1">
    <location>
        <position position="18"/>
    </location>
</feature>
<feature type="modified residue" description="Phosphoserine" evidence="1">
    <location>
        <position position="21"/>
    </location>
</feature>
<feature type="glycosylation site" description="N-linked (GlcNAc...) asparagine" evidence="4 15">
    <location>
        <position position="60"/>
    </location>
</feature>
<feature type="mutagenesis site" description="Disrupts the face-to-face homodimer, leading to increased ability to mediate plasma membrane rupture (cytolysis)." evidence="30">
    <original>A</original>
    <variation>W</variation>
    <location>
        <position position="42"/>
    </location>
</feature>
<feature type="mutagenesis site" description="Abolished ability to induce plasma membrane rupture in response to death stimuli." evidence="23">
    <original>NKKS</original>
    <variation>AAAA</variation>
    <location>
        <begin position="43"/>
        <end position="46"/>
    </location>
</feature>
<feature type="mutagenesis site" description="Forms an inactive homodimer; strongly reduced ability to homooligomerize and mediate plasma membrane rupture (cytolysis)." evidence="30">
    <original>K</original>
    <variation>Q</variation>
    <location>
        <position position="45"/>
    </location>
</feature>
<feature type="mutagenesis site" description="Disrupts the face-to-face homodimer, leading to increased ability to mediate plasma membrane rupture (cytolysis)." evidence="30">
    <original>K</original>
    <variation>R</variation>
    <location>
        <position position="45"/>
    </location>
</feature>
<feature type="mutagenesis site" description="Disrupts the face-to-face homodimer, leading to increased ability to mediate plasma membrane rupture (cytolysis)." evidence="30">
    <original>S</original>
    <variation>A</variation>
    <location>
        <position position="46"/>
    </location>
</feature>
<feature type="mutagenesis site" description="Disrupts the face-to-face Decreased ability to mediate plasma membrane rupture (cytolysis)." evidence="30">
    <original>A</original>
    <variation>S</variation>
    <location>
        <position position="48"/>
    </location>
</feature>
<feature type="mutagenesis site" description="Disrupts the face-to-face Decreased ability to mediate plasma membrane rupture (cytolysis)." evidence="30">
    <original>L</original>
    <variation>N</variation>
    <location>
        <position position="52"/>
    </location>
</feature>
<feature type="mutagenesis site" description="Disrupts the face-to-face Slightly decreased ability to mediate plasma membrane rupture (cytolysis)." evidence="30">
    <original>A</original>
    <variation>C</variation>
    <location>
        <position position="59"/>
    </location>
</feature>
<feature type="mutagenesis site" description="Impaired N-glycosylation and reduced homooligomerization." evidence="15">
    <original>N</original>
    <variation>A</variation>
    <variation>Q</variation>
    <location>
        <position position="60"/>
    </location>
</feature>
<feature type="mutagenesis site" description="Disrupts the face-to-face homodimer, leading to increased ability to mediate plasma membrane rupture (cytolysis)." evidence="30">
    <original>N</original>
    <variation>Q</variation>
    <location>
        <position position="119"/>
    </location>
</feature>
<feature type="helix" evidence="40">
    <location>
        <begin position="38"/>
        <end position="70"/>
    </location>
</feature>
<feature type="helix" evidence="40">
    <location>
        <begin position="71"/>
        <end position="73"/>
    </location>
</feature>
<feature type="helix" evidence="40">
    <location>
        <begin position="77"/>
        <end position="103"/>
    </location>
</feature>
<feature type="turn" evidence="40">
    <location>
        <begin position="109"/>
        <end position="111"/>
    </location>
</feature>
<feature type="helix" evidence="40">
    <location>
        <begin position="112"/>
        <end position="140"/>
    </location>
</feature>
<accession>O70131</accession>
<name>NINJ1_MOUSE</name>
<evidence type="ECO:0000250" key="1">
    <source>
        <dbReference type="UniProtKB" id="P70617"/>
    </source>
</evidence>
<evidence type="ECO:0000250" key="2">
    <source>
        <dbReference type="UniProtKB" id="Q92982"/>
    </source>
</evidence>
<evidence type="ECO:0000255" key="3"/>
<evidence type="ECO:0000255" key="4">
    <source>
        <dbReference type="PROSITE-ProRule" id="PRU00498"/>
    </source>
</evidence>
<evidence type="ECO:0000256" key="5">
    <source>
        <dbReference type="SAM" id="MobiDB-lite"/>
    </source>
</evidence>
<evidence type="ECO:0000269" key="6">
    <source>
    </source>
</evidence>
<evidence type="ECO:0000269" key="7">
    <source>
    </source>
</evidence>
<evidence type="ECO:0000269" key="8">
    <source>
    </source>
</evidence>
<evidence type="ECO:0000269" key="9">
    <source>
    </source>
</evidence>
<evidence type="ECO:0000269" key="10">
    <source>
    </source>
</evidence>
<evidence type="ECO:0000269" key="11">
    <source>
    </source>
</evidence>
<evidence type="ECO:0000269" key="12">
    <source>
    </source>
</evidence>
<evidence type="ECO:0000269" key="13">
    <source>
    </source>
</evidence>
<evidence type="ECO:0000269" key="14">
    <source>
    </source>
</evidence>
<evidence type="ECO:0000269" key="15">
    <source>
    </source>
</evidence>
<evidence type="ECO:0000269" key="16">
    <source>
    </source>
</evidence>
<evidence type="ECO:0000269" key="17">
    <source>
    </source>
</evidence>
<evidence type="ECO:0000269" key="18">
    <source>
    </source>
</evidence>
<evidence type="ECO:0000269" key="19">
    <source>
    </source>
</evidence>
<evidence type="ECO:0000269" key="20">
    <source>
    </source>
</evidence>
<evidence type="ECO:0000269" key="21">
    <source>
    </source>
</evidence>
<evidence type="ECO:0000269" key="22">
    <source>
    </source>
</evidence>
<evidence type="ECO:0000269" key="23">
    <source>
    </source>
</evidence>
<evidence type="ECO:0000269" key="24">
    <source>
    </source>
</evidence>
<evidence type="ECO:0000269" key="25">
    <source>
    </source>
</evidence>
<evidence type="ECO:0000269" key="26">
    <source>
    </source>
</evidence>
<evidence type="ECO:0000269" key="27">
    <source>
    </source>
</evidence>
<evidence type="ECO:0000269" key="28">
    <source>
    </source>
</evidence>
<evidence type="ECO:0000269" key="29">
    <source>
    </source>
</evidence>
<evidence type="ECO:0000269" key="30">
    <source>
    </source>
</evidence>
<evidence type="ECO:0000269" key="31">
    <source>
    </source>
</evidence>
<evidence type="ECO:0000303" key="32">
    <source>
    </source>
</evidence>
<evidence type="ECO:0000303" key="33">
    <source>
    </source>
</evidence>
<evidence type="ECO:0000303" key="34">
    <source>
    </source>
</evidence>
<evidence type="ECO:0000303" key="35">
    <source>
    </source>
</evidence>
<evidence type="ECO:0000305" key="36"/>
<evidence type="ECO:0000305" key="37">
    <source>
    </source>
</evidence>
<evidence type="ECO:0000312" key="38">
    <source>
        <dbReference type="MGI" id="MGI:1196617"/>
    </source>
</evidence>
<evidence type="ECO:0007744" key="39">
    <source>
        <dbReference type="PDB" id="9BIA"/>
    </source>
</evidence>
<evidence type="ECO:0007829" key="40">
    <source>
        <dbReference type="PDB" id="9BIA"/>
    </source>
</evidence>
<proteinExistence type="evidence at protein level"/>
<reference key="1">
    <citation type="journal article" date="1998" name="Genomics">
        <title>The human homologue of the ninjurin gene maps to the candidate region of hereditary sensory neuropathy type I (HSNI).</title>
        <authorList>
            <person name="Chadwick B.P."/>
            <person name="Heath S.K."/>
            <person name="Williamson J."/>
            <person name="Obermayr F."/>
            <person name="Patel L."/>
            <person name="Sheer D."/>
            <person name="Frischauf A.-M."/>
        </authorList>
    </citation>
    <scope>NUCLEOTIDE SEQUENCE [MRNA]</scope>
    <scope>INDUCTION</scope>
</reference>
<reference key="2">
    <citation type="submission" date="1999-12" db="EMBL/GenBank/DDBJ databases">
        <title>Mus musculus ninjurin genomic DNA.</title>
        <authorList>
            <person name="Moon A.R."/>
            <person name="Kim J.W."/>
            <person name="Hong Y.M."/>
            <person name="Oh G.T."/>
            <person name="Chang S.Y."/>
            <person name="Lee K.S."/>
            <person name="Choe I.S."/>
        </authorList>
    </citation>
    <scope>NUCLEOTIDE SEQUENCE [GENOMIC DNA]</scope>
</reference>
<reference key="3">
    <citation type="journal article" date="2009" name="Cell Death Differ.">
        <title>Ninjurin1 mediates macrophage-induced programmed cell death during early ocular development.</title>
        <authorList>
            <person name="Lee H.J."/>
            <person name="Ahn B.J."/>
            <person name="Shin M.W."/>
            <person name="Jeong J.W."/>
            <person name="Kim J.H."/>
            <person name="Kim K.W."/>
        </authorList>
    </citation>
    <scope>FUNCTION</scope>
</reference>
<reference key="4">
    <citation type="journal article" date="2010" name="Cell">
        <title>A tissue-specific atlas of mouse protein phosphorylation and expression.</title>
        <authorList>
            <person name="Huttlin E.L."/>
            <person name="Jedrychowski M.P."/>
            <person name="Elias J.E."/>
            <person name="Goswami T."/>
            <person name="Rad R."/>
            <person name="Beausoleil S.A."/>
            <person name="Villen J."/>
            <person name="Haas W."/>
            <person name="Sowa M.E."/>
            <person name="Gygi S.P."/>
        </authorList>
    </citation>
    <scope>IDENTIFICATION BY MASS SPECTROMETRY [LARGE SCALE ANALYSIS]</scope>
    <source>
        <tissue>Kidney</tissue>
        <tissue>Liver</tissue>
    </source>
</reference>
<reference key="5">
    <citation type="journal article" date="2012" name="Biochem. Biophys. Res. Commun.">
        <title>The N-terminal ectodomain of Ninjurin1 liberated by MMP9 has chemotactic activity.</title>
        <authorList>
            <person name="Ahn B.J."/>
            <person name="Le H."/>
            <person name="Shin M.W."/>
            <person name="Bae S.J."/>
            <person name="Lee E.J."/>
            <person name="Wee H.J."/>
            <person name="Cha J.H."/>
            <person name="Park J.H."/>
            <person name="Lee H.S."/>
            <person name="Lee H.J."/>
            <person name="Jung H."/>
            <person name="Park Z.Y."/>
            <person name="Park S.H."/>
            <person name="Han B.W."/>
            <person name="Seo J.H."/>
            <person name="Lo E.H."/>
            <person name="Kim K.W."/>
        </authorList>
    </citation>
    <scope>FUNCTION (SECRETED NINJURIN-1)</scope>
    <scope>SUBCELLULAR LOCATION (SECRETED NINJURIN-1)</scope>
    <scope>PROTEOLYTIC CLEAVAGE</scope>
</reference>
<reference key="6">
    <citation type="journal article" date="2013" name="Proc. Natl. Acad. Sci. U.S.A.">
        <title>Ninjurin1, a target of p53, regulates p53 expression and p53-dependent cell survival, senescence, and radiation-induced mortality.</title>
        <authorList>
            <person name="Cho S.J."/>
            <person name="Rossi A."/>
            <person name="Jung Y.S."/>
            <person name="Yan W."/>
            <person name="Liu G."/>
            <person name="Zhang J."/>
            <person name="Zhang M."/>
            <person name="Chen X."/>
        </authorList>
    </citation>
    <scope>FUNCTION</scope>
    <scope>INDUCTION</scope>
</reference>
<reference key="7">
    <citation type="journal article" date="2014" name="J. Biol. Chem.">
        <title>Ninjurin1 deficiency attenuates susceptibility of experimental autoimmune encephalomyelitis in mice.</title>
        <authorList>
            <person name="Ahn B.J."/>
            <person name="Le H."/>
            <person name="Shin M.W."/>
            <person name="Bae S.J."/>
            <person name="Lee E.J."/>
            <person name="Wee H.J."/>
            <person name="Cha J.H."/>
            <person name="Lee H.J."/>
            <person name="Lee H.S."/>
            <person name="Kim J.H."/>
            <person name="Kim C.Y."/>
            <person name="Seo J.H."/>
            <person name="Lo E.H."/>
            <person name="Jeon S."/>
            <person name="Lee M.N."/>
            <person name="Oh G.T."/>
            <person name="Yin G.N."/>
            <person name="Ryu J.K."/>
            <person name="Suh J.K."/>
            <person name="Kim K.W."/>
        </authorList>
    </citation>
    <scope>FUNCTION</scope>
    <scope>DISRUPTION PHENOTYPE</scope>
</reference>
<reference key="8">
    <citation type="journal article" date="2014" name="J. Biol. Chem.">
        <title>Ninjurin1 enhances the basal motility and transendothelial migration of immune cells by inducing protrusive membrane dynamics.</title>
        <authorList>
            <person name="Ahn B.J."/>
            <person name="Le H."/>
            <person name="Shin M.W."/>
            <person name="Bae S.J."/>
            <person name="Lee E.J."/>
            <person name="Lee S.Y."/>
            <person name="Yang J.H."/>
            <person name="Wee H.J."/>
            <person name="Cha J.H."/>
            <person name="Seo J.H."/>
            <person name="Lee H.S."/>
            <person name="Lee H.J."/>
            <person name="Arai K."/>
            <person name="Lo E.H."/>
            <person name="Jeon S."/>
            <person name="Oh G.T."/>
            <person name="Kim W.J."/>
            <person name="Ryu J.K."/>
            <person name="Suh J.K."/>
            <person name="Kim K.W."/>
        </authorList>
    </citation>
    <scope>FUNCTION</scope>
    <scope>SUBCELLULAR LOCATION</scope>
    <scope>DISRUPTION PHENOTYPE</scope>
</reference>
<reference key="9">
    <citation type="journal article" date="2014" name="Proc. Natl. Acad. Sci. U.S.A.">
        <title>Inhibition of Ninjurin 1 restores erectile function through dual angiogenic and neurotrophic effects in the diabetic mouse.</title>
        <authorList>
            <person name="Yin G.N."/>
            <person name="Choi M.J."/>
            <person name="Kim W.J."/>
            <person name="Kwon M.H."/>
            <person name="Song K.M."/>
            <person name="Park J.M."/>
            <person name="Das N.D."/>
            <person name="Kwon K.D."/>
            <person name="Batbold D."/>
            <person name="Oh G.T."/>
            <person name="Koh G.Y."/>
            <person name="Kim K.W."/>
            <person name="Ryu J.K."/>
            <person name="Suh J.K."/>
        </authorList>
    </citation>
    <scope>FUNCTION</scope>
</reference>
<reference key="10">
    <citation type="journal article" date="2015" name="Am. J. Respir. Cell Mol. Biol.">
        <title>Contribution of Ninjurin1 to Toll-like receptor 4 signaling and systemic inflammation.</title>
        <authorList>
            <person name="Jennewein C."/>
            <person name="Sowa R."/>
            <person name="Faber A.C."/>
            <person name="Dildey M."/>
            <person name="von Knethen A."/>
            <person name="Meybohm P."/>
            <person name="Scheller B."/>
            <person name="Droese S."/>
            <person name="Zacharowski K."/>
        </authorList>
    </citation>
    <scope>FUNCTION</scope>
</reference>
<reference key="11">
    <citation type="journal article" date="2015" name="Circ. J.">
        <title>Ninjurin1 is a novel factor to regulate angiogenesis through the function of pericytes.</title>
        <authorList>
            <person name="Matsuki M."/>
            <person name="Kabara M."/>
            <person name="Saito Y."/>
            <person name="Shimamura K."/>
            <person name="Minoshima A."/>
            <person name="Nishimura M."/>
            <person name="Aonuma T."/>
            <person name="Takehara N."/>
            <person name="Hasebe N."/>
            <person name="Kawabe J."/>
        </authorList>
    </citation>
    <scope>FUNCTION</scope>
</reference>
<reference key="12">
    <citation type="journal article" date="2016" name="Int. J. Oncol.">
        <title>Ninjurin1 regulates lipopolysaccharide-induced inflammation through direct binding.</title>
        <authorList>
            <person name="Shin M.W."/>
            <person name="Bae S.J."/>
            <person name="Wee H.J."/>
            <person name="Lee H.J."/>
            <person name="Ahn B.J."/>
            <person name="Le H."/>
            <person name="Lee E.J."/>
            <person name="Kim R.H."/>
            <person name="Lee H.S."/>
            <person name="Seo J.H."/>
            <person name="Park J.H."/>
            <person name="Kim K.W."/>
        </authorList>
    </citation>
    <scope>FUNCTION</scope>
</reference>
<reference key="13">
    <citation type="journal article" date="2017" name="J. Cell. Biochem.">
        <title>Ninjurin1 assembles into a homomeric protein complex maintained by N-linked glycosylation.</title>
        <authorList>
            <person name="Bae S.J."/>
            <person name="Shin M.W."/>
            <person name="Kim R.H."/>
            <person name="Shin D."/>
            <person name="Son T."/>
            <person name="Wee H.J."/>
            <person name="Kim K.W."/>
        </authorList>
    </citation>
    <scope>SUBUNIT</scope>
    <scope>GLYCOSYLATION AT ASN-60</scope>
    <scope>MUTAGENESIS OF ASN-60</scope>
</reference>
<reference key="14">
    <citation type="journal article" date="2017" name="Mol. Neurobiol.">
        <title>Disruption of Ninjurin1 leads to repetitive and anxiety-like behaviors in mice.</title>
        <authorList>
            <person name="Le H."/>
            <person name="Ahn B.J."/>
            <person name="Lee H.S."/>
            <person name="Shin A."/>
            <person name="Chae S."/>
            <person name="Lee S.Y."/>
            <person name="Shin M.W."/>
            <person name="Lee E.J."/>
            <person name="Cha J.H."/>
            <person name="Son T."/>
            <person name="Seo J.H."/>
            <person name="Wee H.J."/>
            <person name="Lee H.J."/>
            <person name="Jang Y."/>
            <person name="Lo E.H."/>
            <person name="Jeon S."/>
            <person name="Oh G.T."/>
            <person name="Kim D."/>
            <person name="Kim K.W."/>
        </authorList>
    </citation>
    <scope>SUBCELLULAR LOCATION</scope>
    <scope>DISRUPTION PHENOTYPE</scope>
</reference>
<reference key="15">
    <citation type="journal article" date="2017" name="Proc. Natl. Acad. Sci. U.S.A.">
        <title>Ninjurin 1 has two opposing functions in tumorigenesis in a p53-dependent manner.</title>
        <authorList>
            <person name="Yang H.J."/>
            <person name="Zhang J."/>
            <person name="Yan W."/>
            <person name="Cho S.J."/>
            <person name="Lucchesi C."/>
            <person name="Chen M."/>
            <person name="Huang E.C."/>
            <person name="Scoumanne A."/>
            <person name="Zhang W."/>
            <person name="Chen X."/>
        </authorList>
    </citation>
    <scope>FUNCTION</scope>
    <scope>DISRUPTION PHENOTYPE</scope>
</reference>
<reference key="16">
    <citation type="journal article" date="2018" name="Arterioscler. Thromb. Vasc. Biol.">
        <title>Pericyte-specific ninjurin1 deletion attenuates vessel maturation and blood flow recovery in hind limb ischemia.</title>
        <authorList>
            <person name="Minoshima A."/>
            <person name="Kabara M."/>
            <person name="Matsuki M."/>
            <person name="Yoshida Y."/>
            <person name="Kano K."/>
            <person name="Tomita Y."/>
            <person name="Hayasaka T."/>
            <person name="Horiuchi K."/>
            <person name="Saito Y."/>
            <person name="Aonuma T."/>
            <person name="Nishimura M."/>
            <person name="Maruyama K."/>
            <person name="Nakagawa N."/>
            <person name="Sawada J."/>
            <person name="Takehara N."/>
            <person name="Hasebe N."/>
            <person name="Kawabe J.I."/>
        </authorList>
    </citation>
    <scope>FUNCTION</scope>
    <scope>DISRUPTION PHENOTYPE</scope>
</reference>
<reference key="17">
    <citation type="journal article" date="2018" name="Sci. Rep.">
        <title>Ninjurin1 plays a crucial role in pulmonary fibrosis by promoting interaction between macrophages and alveolar epithelial cells.</title>
        <authorList>
            <person name="Choi S."/>
            <person name="Woo J.K."/>
            <person name="Jang Y.S."/>
            <person name="Kang J.H."/>
            <person name="Hwang J.I."/>
            <person name="Seong J.K."/>
            <person name="Yoon Y.S."/>
            <person name="Oh S.H."/>
        </authorList>
    </citation>
    <scope>FUNCTION</scope>
</reference>
<reference key="18">
    <citation type="journal article" date="2019" name="Biochem. Biophys. Res. Commun.">
        <title>Ninjurin 1 mediates peripheral nerve regeneration through Schwann cell maturation of NG2-positive cells.</title>
        <authorList>
            <person name="Tomita Y."/>
            <person name="Horiuchi K."/>
            <person name="Kano K."/>
            <person name="Tatsukawa T."/>
            <person name="Matsuo R."/>
            <person name="Hayasaka T."/>
            <person name="Yoshida Y."/>
            <person name="Kabara M."/>
            <person name="Yasuda S."/>
            <person name="Nakajima K."/>
            <person name="Nakagawa N."/>
            <person name="Takehara N."/>
            <person name="Okizaki A."/>
            <person name="Hasebe N."/>
            <person name="Kawabe J.I."/>
        </authorList>
    </citation>
    <scope>FUNCTION</scope>
</reference>
<reference key="19">
    <citation type="journal article" date="2019" name="Exp. Mol. Med.">
        <title>Ninjurin1 positively regulates osteoclast development by enhancing the survival of prefusion osteoclasts.</title>
        <authorList>
            <person name="Bae S.J."/>
            <person name="Shin M.W."/>
            <person name="Son T."/>
            <person name="Lee H.S."/>
            <person name="Chae J.S."/>
            <person name="Jeon S."/>
            <person name="Oh G.T."/>
            <person name="Kim K.W."/>
        </authorList>
    </citation>
    <scope>FUNCTION</scope>
</reference>
<reference key="20">
    <citation type="journal article" date="2019" name="PLoS ONE">
        <title>Ninjurin1 regulates striated muscle growth and differentiation.</title>
        <authorList>
            <person name="Kny M."/>
            <person name="Csalyi K.D."/>
            <person name="Klaeske K."/>
            <person name="Busch K."/>
            <person name="Meyer A.M."/>
            <person name="Merks A.M."/>
            <person name="Darm K."/>
            <person name="Dworatzek E."/>
            <person name="Fliegner D."/>
            <person name="Baczko I."/>
            <person name="Regitz-Zagrosek V."/>
            <person name="Butter C."/>
            <person name="Luft F.C."/>
            <person name="Panakova D."/>
            <person name="Fielitz J."/>
        </authorList>
    </citation>
    <scope>FUNCTION</scope>
    <scope>SUBCELLULAR LOCATION</scope>
</reference>
<reference key="21">
    <citation type="journal article" date="2020" name="Circulation">
        <title>Anti-inflammatory actions of soluble ninjurin-1 ameliorate atherosclerosis.</title>
        <authorList>
            <person name="Jeon S."/>
            <person name="Kim T.K."/>
            <person name="Jeong S.J."/>
            <person name="Jung I.H."/>
            <person name="Kim N."/>
            <person name="Lee M.N."/>
            <person name="Sonn S.K."/>
            <person name="Seo S."/>
            <person name="Jin J."/>
            <person name="Kweon H.Y."/>
            <person name="Kim S."/>
            <person name="Shim D."/>
            <person name="Park Y.M."/>
            <person name="Lee S.H."/>
            <person name="Kim K.W."/>
            <person name="Cybulsky M.I."/>
            <person name="Shim H."/>
            <person name="Roh T.Y."/>
            <person name="Park W.Y."/>
            <person name="Lee H.O."/>
            <person name="Choi J.H."/>
            <person name="Park S.H."/>
            <person name="Oh G.T."/>
        </authorList>
    </citation>
    <scope>FUNCTION (SECRETED NINJURIN-1)</scope>
    <scope>SUBCELLULAR LOCATION (SECRETED NINJURIN-1)</scope>
    <scope>PROTEOLYTIC CLEAVAGE</scope>
</reference>
<reference key="22">
    <citation type="journal article" date="2021" name="Nature">
        <title>NINJ1 mediates plasma membrane rupture during lytic cell death.</title>
        <authorList>
            <person name="Kayagaki N."/>
            <person name="Kornfeld O.S."/>
            <person name="Lee B.L."/>
            <person name="Stowe I.B."/>
            <person name="O'Rourke K."/>
            <person name="Li Q."/>
            <person name="Sandoval W."/>
            <person name="Yan D."/>
            <person name="Kang J."/>
            <person name="Xu M."/>
            <person name="Zhang J."/>
            <person name="Lee W.P."/>
            <person name="McKenzie B.S."/>
            <person name="Ulas G."/>
            <person name="Payandeh J."/>
            <person name="Roose-Girma M."/>
            <person name="Modrusan Z."/>
            <person name="Reja R."/>
            <person name="Sagolla M."/>
            <person name="Webster J.D."/>
            <person name="Cho V."/>
            <person name="Andrews T.D."/>
            <person name="Morris L.X."/>
            <person name="Miosge L.A."/>
            <person name="Goodnow C.C."/>
            <person name="Bertram E.M."/>
            <person name="Dixit V.M."/>
        </authorList>
    </citation>
    <scope>FUNCTION</scope>
    <scope>SUBCELLULAR LOCATION</scope>
    <scope>SUBUNIT</scope>
    <scope>DISRUPTION PHENOTYPE</scope>
    <scope>MUTAGENESIS OF 43-ASN--SER-46</scope>
</reference>
<reference key="23">
    <citation type="journal article" date="2022" name="Elife">
        <title>Glycine inhibits NINJ1 membrane clustering to suppress plasma membrane rupture in cell death.</title>
        <authorList>
            <person name="Borges J.P."/>
            <person name="Saetra R.S.R."/>
            <person name="Volchuk A."/>
            <person name="Bugge M."/>
            <person name="Devant P."/>
            <person name="Sporsheim B."/>
            <person name="Kilburn B.R."/>
            <person name="Evavold C.L."/>
            <person name="Kagan J.C."/>
            <person name="Goldenberg N.M."/>
            <person name="Flo T.H."/>
            <person name="Steinberg B.E."/>
        </authorList>
    </citation>
    <scope>FUNCTION</scope>
    <scope>ACTIVITY REGULATION</scope>
</reference>
<reference key="24">
    <citation type="journal article" date="2023" name="Cell Death Dis.">
        <title>NINJ1 is activated by cell swelling to regulate plasma membrane permeabilization during regulated necrosis.</title>
        <authorList>
            <person name="Dondelinger Y."/>
            <person name="Priem D."/>
            <person name="Huyghe J."/>
            <person name="Delanghe T."/>
            <person name="Vandenabeele P."/>
            <person name="Bertrand M.J.M."/>
        </authorList>
    </citation>
    <scope>FUNCTION</scope>
</reference>
<reference key="25">
    <citation type="journal article" date="2023" name="Nature">
        <title>Inhibiting membrane rupture with NINJ1 antibodies limits tissue injury.</title>
        <authorList>
            <person name="Kayagaki N."/>
            <person name="Stowe I.B."/>
            <person name="Alegre K."/>
            <person name="Deshpande I."/>
            <person name="Wu S."/>
            <person name="Lin Z."/>
            <person name="Kornfeld O.S."/>
            <person name="Lee B.L."/>
            <person name="Zhang J."/>
            <person name="Liu J."/>
            <person name="Suto E."/>
            <person name="Lee W.P."/>
            <person name="Schneider K."/>
            <person name="Lin W."/>
            <person name="Seshasayee D."/>
            <person name="Bhangale T."/>
            <person name="Chalouni C."/>
            <person name="Johnson M.C."/>
            <person name="Joshi P."/>
            <person name="Mossemann J."/>
            <person name="Zhao S."/>
            <person name="Ali D."/>
            <person name="Goldenberg N.M."/>
            <person name="Sayed B.A."/>
            <person name="Steinberg B.E."/>
            <person name="Newton K."/>
            <person name="Webster J.D."/>
            <person name="Kelly R.L."/>
            <person name="Dixit V.M."/>
        </authorList>
    </citation>
    <scope>FUNCTION</scope>
    <scope>SUBUNIT</scope>
</reference>
<reference key="26">
    <citation type="journal article" date="2023" name="Nature">
        <title>Structural basis of NINJ1-mediated plasma membrane rupture in cell death.</title>
        <authorList>
            <person name="Degen M."/>
            <person name="Santos J.C."/>
            <person name="Pluhackova K."/>
            <person name="Cebrero G."/>
            <person name="Ramos S."/>
            <person name="Jankevicius G."/>
            <person name="Hartenian E."/>
            <person name="Guillerm U."/>
            <person name="Mari S.A."/>
            <person name="Kohl B."/>
            <person name="Mueller D.J."/>
            <person name="Schanda P."/>
            <person name="Maier T."/>
            <person name="Perez C."/>
            <person name="Sieben C."/>
            <person name="Broz P."/>
            <person name="Hiller S."/>
        </authorList>
    </citation>
    <scope>FUNCTION</scope>
    <scope>SUBUNIT</scope>
</reference>
<reference key="27">
    <citation type="journal article" date="2024" name="EMBO J.">
        <title>NINJ1 induces plasma membrane rupture and release of damage-associated molecular pattern molecules during ferroptosis.</title>
        <authorList>
            <person name="Ramos S."/>
            <person name="Hartenian E."/>
            <person name="Santos J.C."/>
            <person name="Walch P."/>
            <person name="Broz P."/>
        </authorList>
    </citation>
    <scope>FUNCTION</scope>
    <scope>SUBCELLULAR LOCATION</scope>
    <scope>SUBUNIT</scope>
</reference>
<reference key="28">
    <citation type="journal article" date="2024" name="Nat. Commun.">
        <title>NINJ1 mediates inflammatory cell death, PANoptosis, and lethality during infection conditions and heat stress.</title>
        <authorList>
            <person name="Han J.H."/>
            <person name="Karki R."/>
            <person name="Malireddi R.K.S."/>
            <person name="Mall R."/>
            <person name="Sarkar R."/>
            <person name="Sharma B.R."/>
            <person name="Klein J."/>
            <person name="Berns H."/>
            <person name="Pisharath H."/>
            <person name="Pruett-Miller S.M."/>
            <person name="Bae S.J."/>
            <person name="Kanneganti T.D."/>
        </authorList>
    </citation>
    <scope>FUNCTION</scope>
</reference>
<reference evidence="39" key="29">
    <citation type="journal article" date="2024" name="Nature">
        <title>Autoinhibition of dimeric NINJ1 prevents plasma membrane rupture.</title>
        <authorList>
            <person name="Pourmal S."/>
            <person name="Truong M.E."/>
            <person name="Johnson M.C."/>
            <person name="Yang Y."/>
            <person name="Zhou L."/>
            <person name="Alegre K."/>
            <person name="Stowe I.B."/>
            <person name="Gupta S."/>
            <person name="Chen P.A."/>
            <person name="Zhang Y."/>
            <person name="Rohou A."/>
            <person name="Newton K."/>
            <person name="Kayagaki N."/>
            <person name="Dixit V.M."/>
            <person name="Deshpande I."/>
        </authorList>
    </citation>
    <scope>STRUCTURE BY ELECTRON MICROSCOPY (3.0 ANGSTROMS) OF MUTANT GLN-45 IN COMPLEX WITH NANOBODY NB538</scope>
    <scope>FUNCTION</scope>
    <scope>ACTIVITY REGULATION</scope>
    <scope>SUBUNIT</scope>
    <scope>DOMAIN</scope>
    <scope>MUTAGENESIS OF ALA-42; LYS-45; SER-46; ALA-48; LEU-52; ALA-59 AND ASN-119</scope>
</reference>
<keyword id="KW-0002">3D-structure</keyword>
<keyword id="KW-0007">Acetylation</keyword>
<keyword id="KW-0037">Angiogenesis</keyword>
<keyword id="KW-0085">Behavior</keyword>
<keyword id="KW-0130">Cell adhesion</keyword>
<keyword id="KW-1003">Cell membrane</keyword>
<keyword id="KW-0204">Cytolysis</keyword>
<keyword id="KW-0325">Glycoprotein</keyword>
<keyword id="KW-0395">Inflammatory response</keyword>
<keyword id="KW-0472">Membrane</keyword>
<keyword id="KW-0597">Phosphoprotein</keyword>
<keyword id="KW-1185">Reference proteome</keyword>
<keyword id="KW-0964">Secreted</keyword>
<keyword id="KW-0770">Synapse</keyword>
<keyword id="KW-0812">Transmembrane</keyword>
<keyword id="KW-1133">Transmembrane helix</keyword>
<comment type="function">
    <molecule>Ninjurin-1</molecule>
    <text evidence="2 6 8 9 10 11 12 13 16 17 18 19 20 21 23 24 25 26 27 28 29 30">Effector of various programmed cell death, such as pyroptosis and necroptosis, which mediates plasma membrane rupture (cytolysis) (PubMed:19557008, PubMed:33472215, PubMed:36468682, PubMed:37196676, PubMed:37198476, PubMed:39476863). Oligomerizes in response to death stimuli and forms ring-like structures on the plasma membrane: acts by cutting and shedding membrane disks, like a cookie cutter, leading to membrane damage and loss that cannot be repaired by the cell (PubMed:33472215, PubMed:37196676, PubMed:37198476). Plasma membrane rupture leads to release intracellular molecules named damage-associated molecular patterns (DAMPs) that propagate the inflammatory response (PubMed:33472215, PubMed:37196676, PubMed:37198476). Mechanistically, mediates plasma membrane rupture by introducing hydrophilic faces of 2 alpha helices into the hydrophobic membrane (PubMed:37198476). Induces plasma membrane rupture downstream of Gasdermin (GSDMA, GSDMB, GSDMC, GSDMD, or GSDME) or MLKL during pyroptosis or necroptosis, respectively (PubMed:33472215, PubMed:37196676, PubMed:37198476). Acts as an effector of PANoptosis downstream of CASP1, CASP4, CASP8 and RIPK3 (PubMed:38409108). Also induces plasma membrane rupture in response to cell swelling caused by osmotic stress and ferroptosis downstream of lipid peroxidation (PubMed:37980412, PubMed:38396301). Acts as a regulator of Toll-like receptor 4 (TLR4) signaling triggered by lipopolysaccharide (LPS) during systemic inflammation; directly binds LPS (PubMed:25860173). Involved in leukocyte migration during inflammation by promoting transendothelial migration of macrophages via homotypic binding (PubMed:24917672). Promotes the migration of monocytes across the brain endothelium to central nervous system inflammatory lesions (By similarity). Also acts as a homophilic transmembrane adhesion molecule involved in various processes such as axonal growth, cell chemotaxis and angiogenesis (PubMed:24347169, PubMed:24917672, PubMed:31526566). Promotes cell adhesion by mediating homophilic interactions via its extracellular N-terminal adhesion motif (N-NAM) (PubMed:24917672, PubMed:30510259). Involved in the progression of the inflammatory stress by promoting cell-to-cell interactions between immune cells and endothelial cells (PubMed:24917672, PubMed:30510259). Plays a role in nerve regeneration by promoting maturation of Schwann cells (PubMed:31526566). Acts as a regulator of angiogenesis (PubMed:25766274, PubMed:30354207). Promotes the formation of new vessels by mediating the interaction between capillary pericyte cells and endothelial cells (PubMed:25766274, PubMed:30354207). Also mediates vascular functions in penile tissue as well as vascular formation (PubMed:24979788). Promotes osteoclasts development by enhancing the survival of prefusion osteoclasts (PubMed:30700695). Also involved in striated muscle growth and differentiation (PubMed:31091274). Also involved in cell senescence in a p53/TP53 manner, possibly by acting as an indirect regulator of p53/TP53 mRNA translation (PubMed:23690620, PubMed:29073078).</text>
</comment>
<comment type="function">
    <molecule>Secreted ninjurin-1</molecule>
    <text evidence="7 22">Secreted form generated by cleavage, which has chemotactic activity (PubMed:23142597). Acts as an anti-inflammatory mediator by promoting monocyte recruitment, thereby ameliorating atherosclerosis (PubMed:32883094).</text>
</comment>
<comment type="activity regulation">
    <molecule>Ninjurin-1</molecule>
    <text evidence="2 24 30">In response to death stimuli, homooligomerizes and disrupts membrane integrity by introducing the hydrophilic faces of alpha1 and alpha2 helices into the hydrophobic membrane (By similarity). Homooligomerization and ability to mediate plasma membrane rupture is inhibited by glycine; it is unclear whether glycine directly or indirectly inhibits homooligomerization (PubMed:36468682). In normal conditions, NINJ1 is autoinhibited via formation of a homodimer: in the inactive homodimer, the alpha1 and alpha2 helices (residues 44-74) form a single transmembrane region without a kink, in which hydrophilic faces of alpha1 and alpha2 helices are sequestered (PubMed:39476863).</text>
</comment>
<comment type="subunit">
    <molecule>Ninjurin-1</molecule>
    <text evidence="23 25 26 28 30">Homodimer; in absence of death stimuli, forms an inactive homodimer (PubMed:39476863). Homooligomer; in response to death stimuli, homooligomerizes into long, highly branched filaments and large, ring-shaped structures in the membrane (PubMed:33472215, PubMed:37196676, PubMed:37198476, PubMed:38396301).</text>
</comment>
<comment type="subcellular location">
    <molecule>Ninjurin-1</molecule>
    <subcellularLocation>
        <location evidence="10 14 20 23 28">Cell membrane</location>
        <topology evidence="3">Multi-pass membrane protein</topology>
    </subcellularLocation>
    <subcellularLocation>
        <location evidence="14">Synaptic cell membrane</location>
        <topology evidence="3">Multi-pass membrane protein</topology>
    </subcellularLocation>
</comment>
<comment type="subcellular location">
    <molecule>Secreted ninjurin-1</molecule>
    <subcellularLocation>
        <location evidence="7 22">Secreted</location>
    </subcellularLocation>
</comment>
<comment type="induction">
    <text evidence="8 31">By nerve injury (PubMed:9465296). Expression is activated by p53/TP53 (PubMed:23690620).</text>
</comment>
<comment type="domain">
    <molecule>Ninjurin-1</molecule>
    <text evidence="2 30">Composed of 4 alpha helices: 2 hydrophobic transmembrane regions (alpha3 and alpha4) and 2 alpha helices (alpha1 and alpha2) (By similarity). Alpha1 and alpha2 feature one hydrophobic side and a hydrophilic side (By similarity). Following NINJ1 activation, alpha1 and alpha2 helices insert into the membrane and drive NINJ1 oligomerization via interactions between alpha3 and alpha4 and the hydrophobic face of alpha1 from an adjacent subunit (By similarity). Such structures disrupt membrane integrity and form a lesion through the introduction of the hydrophilic faces of alpha1 and alpha2 into the hydrophobic membrane (By similarity). In absence of death stimuli, NINJ1 is an inactive homodimer, where the alpha1 and alpha2 helices form a single transmembrane region without a kink: in the homodimer, hydrophilic faces of alpha1 and alpha2 helices are sequestered and the binding site for kinked alpha1 and alpha2 helices from neighboring activated NINJ1 molecules are occluded, thereby preventing membrane rupture (PubMed:39476863). The topology shown in the entry corresponds to the activated form (PubMed:39476863).</text>
</comment>
<comment type="PTM">
    <molecule>Ninjurin-1</molecule>
    <text evidence="7 22">Cleaved by MMP9 protease to generate the Secreted ninjurin-1 form.</text>
</comment>
<comment type="PTM">
    <molecule>Ninjurin-1</molecule>
    <text evidence="15">N-linked glycosylation is required for homooligomerization.</text>
</comment>
<comment type="disruption phenotype">
    <text evidence="9 10 14 16 17 23">No visible phenotype in most cases (PubMed:24347169, PubMed:27815839). Some mice have dome-shaped heads and die within 2 months after birth (PubMed:27815839). Mice show abnormal behavior, reminiscent of obsessive-compulsive disorder: mice exhibit compulsive grooming-induced hair loss and self-made lesions as well as increased anxiety-like behaviors (PubMed:27815839). Mice are prone to systemic chronic inflammation in the skin, liver, kidney and pancreas (PubMed:29073078). During inflammation, reduced motility of bone marrow-derived macrophages and protrusive membrane dynamics are observed (PubMed:24917672). Mice also display attenuated susceptibility to experimental autoimmune encephalomyelitis, an animal model of multiple sclerosis: attenuated susceptibility is caused by reduced leukocyte infiltration and decreased adherence of leukocytes on retinal vessels (PubMed:27815839). Abolished ability to mediate plasma membrane rupture downstream cell death, without affecting GSDMD pore formation (PubMed:33472215). Conditional deletion in pericytes impairs vessel maturation and blood flow recovery in hind limb ischemia (PubMed:30354207).</text>
</comment>
<comment type="similarity">
    <text evidence="36">Belongs to the ninjurin family.</text>
</comment>
<comment type="online information" name="Protein Spotlight">
    <link uri="https://www.proteinspotlight.org/back_issues/265/"/>
    <text>Rupture - Issue 265 of January 2024</text>
</comment>
<sequence length="152" mass="16555">MESGTEEYELNGDLRPGSPGSPDALPPRWGLRNRPINVNHYANKKSAAESMLDIALLMANASQLKAVVEQGNDFAFFVPLVVLISISLVLQIGVGVLLIFLVKYDLNNPAKHAKLDFLNNLATGLVFIIVVVNIFITAFGVQKPVMDVAPRQ</sequence>
<protein>
    <recommendedName>
        <fullName evidence="32">Ninjurin-1</fullName>
    </recommendedName>
    <alternativeName>
        <fullName evidence="35">Nerve injury-induced protein 1</fullName>
    </alternativeName>
    <component>
        <recommendedName>
            <fullName evidence="36">Secreted ninjurin-1</fullName>
        </recommendedName>
        <alternativeName>
            <fullName evidence="33">Soluble ninjurin-1</fullName>
            <shortName evidence="33">sNinJ1</shortName>
        </alternativeName>
    </component>
</protein>
<organism>
    <name type="scientific">Mus musculus</name>
    <name type="common">Mouse</name>
    <dbReference type="NCBI Taxonomy" id="10090"/>
    <lineage>
        <taxon>Eukaryota</taxon>
        <taxon>Metazoa</taxon>
        <taxon>Chordata</taxon>
        <taxon>Craniata</taxon>
        <taxon>Vertebrata</taxon>
        <taxon>Euteleostomi</taxon>
        <taxon>Mammalia</taxon>
        <taxon>Eutheria</taxon>
        <taxon>Euarchontoglires</taxon>
        <taxon>Glires</taxon>
        <taxon>Rodentia</taxon>
        <taxon>Myomorpha</taxon>
        <taxon>Muroidea</taxon>
        <taxon>Muridae</taxon>
        <taxon>Murinae</taxon>
        <taxon>Mus</taxon>
        <taxon>Mus</taxon>
    </lineage>
</organism>
<dbReference type="EMBL" id="U91513">
    <property type="protein sequence ID" value="AAC14594.1"/>
    <property type="molecule type" value="mRNA"/>
</dbReference>
<dbReference type="EMBL" id="AF219626">
    <property type="protein sequence ID" value="AAG32161.1"/>
    <property type="molecule type" value="Genomic_DNA"/>
</dbReference>
<dbReference type="CCDS" id="CCDS26497.1"/>
<dbReference type="RefSeq" id="NP_038638.1">
    <property type="nucleotide sequence ID" value="NM_013610.4"/>
</dbReference>
<dbReference type="PDB" id="9BIA">
    <property type="method" value="EM"/>
    <property type="resolution" value="3.00 A"/>
    <property type="chains" value="A/B/C/D=1-152"/>
</dbReference>
<dbReference type="PDBsum" id="9BIA"/>
<dbReference type="EMDB" id="EMD-44585"/>
<dbReference type="SMR" id="O70131"/>
<dbReference type="FunCoup" id="O70131">
    <property type="interactions" value="53"/>
</dbReference>
<dbReference type="GlyCosmos" id="O70131">
    <property type="glycosylation" value="1 site, No reported glycans"/>
</dbReference>
<dbReference type="GlyGen" id="O70131">
    <property type="glycosylation" value="1 site"/>
</dbReference>
<dbReference type="iPTMnet" id="O70131"/>
<dbReference type="PhosphoSitePlus" id="O70131"/>
<dbReference type="jPOST" id="O70131"/>
<dbReference type="PaxDb" id="10090-ENSMUSP00000036740"/>
<dbReference type="ProteomicsDB" id="293556"/>
<dbReference type="Pumba" id="O70131"/>
<dbReference type="Antibodypedia" id="28361">
    <property type="antibodies" value="172 antibodies from 27 providers"/>
</dbReference>
<dbReference type="DNASU" id="18081"/>
<dbReference type="Ensembl" id="ENSMUST00000049022.15">
    <property type="protein sequence ID" value="ENSMUSP00000036740.9"/>
    <property type="gene ID" value="ENSMUSG00000037966.16"/>
</dbReference>
<dbReference type="GeneID" id="18081"/>
<dbReference type="KEGG" id="mmu:18081"/>
<dbReference type="UCSC" id="uc007qiw.1">
    <property type="organism name" value="mouse"/>
</dbReference>
<dbReference type="AGR" id="MGI:1196617"/>
<dbReference type="CTD" id="4814"/>
<dbReference type="MGI" id="MGI:1196617">
    <property type="gene designation" value="Ninj1"/>
</dbReference>
<dbReference type="VEuPathDB" id="HostDB:ENSMUSG00000037966"/>
<dbReference type="eggNOG" id="ENOG502S12Z">
    <property type="taxonomic scope" value="Eukaryota"/>
</dbReference>
<dbReference type="GeneTree" id="ENSGT00940000158892"/>
<dbReference type="HOGENOM" id="CLU_093971_2_0_1"/>
<dbReference type="InParanoid" id="O70131"/>
<dbReference type="OMA" id="LNTMNNA"/>
<dbReference type="OrthoDB" id="88390at9989"/>
<dbReference type="PhylomeDB" id="O70131"/>
<dbReference type="TreeFam" id="TF323538"/>
<dbReference type="BioGRID-ORCS" id="18081">
    <property type="hits" value="4 hits in 78 CRISPR screens"/>
</dbReference>
<dbReference type="ChiTaRS" id="Ninj1">
    <property type="organism name" value="mouse"/>
</dbReference>
<dbReference type="PRO" id="PR:O70131"/>
<dbReference type="Proteomes" id="UP000000589">
    <property type="component" value="Chromosome 13"/>
</dbReference>
<dbReference type="RNAct" id="O70131">
    <property type="molecule type" value="protein"/>
</dbReference>
<dbReference type="Bgee" id="ENSMUSG00000037966">
    <property type="expression patterns" value="Expressed in stroma of bone marrow and 263 other cell types or tissues"/>
</dbReference>
<dbReference type="ExpressionAtlas" id="O70131">
    <property type="expression patterns" value="baseline and differential"/>
</dbReference>
<dbReference type="GO" id="GO:0005576">
    <property type="term" value="C:extracellular region"/>
    <property type="evidence" value="ECO:0007669"/>
    <property type="project" value="UniProtKB-SubCell"/>
</dbReference>
<dbReference type="GO" id="GO:0031527">
    <property type="term" value="C:filopodium membrane"/>
    <property type="evidence" value="ECO:0000314"/>
    <property type="project" value="UniProtKB"/>
</dbReference>
<dbReference type="GO" id="GO:0005886">
    <property type="term" value="C:plasma membrane"/>
    <property type="evidence" value="ECO:0000314"/>
    <property type="project" value="UniProtKB"/>
</dbReference>
<dbReference type="GO" id="GO:0097060">
    <property type="term" value="C:synaptic membrane"/>
    <property type="evidence" value="ECO:0000314"/>
    <property type="project" value="UniProtKB"/>
</dbReference>
<dbReference type="GO" id="GO:0098631">
    <property type="term" value="F:cell adhesion mediator activity"/>
    <property type="evidence" value="ECO:0000314"/>
    <property type="project" value="UniProtKB"/>
</dbReference>
<dbReference type="GO" id="GO:0098632">
    <property type="term" value="F:cell-cell adhesion mediator activity"/>
    <property type="evidence" value="ECO:0000315"/>
    <property type="project" value="UniProtKB"/>
</dbReference>
<dbReference type="GO" id="GO:0001530">
    <property type="term" value="F:lipopolysaccharide binding"/>
    <property type="evidence" value="ECO:0000314"/>
    <property type="project" value="UniProtKB"/>
</dbReference>
<dbReference type="GO" id="GO:0140912">
    <property type="term" value="F:membrane destabilizing activity"/>
    <property type="evidence" value="ECO:0000314"/>
    <property type="project" value="UniProtKB"/>
</dbReference>
<dbReference type="GO" id="GO:0001525">
    <property type="term" value="P:angiogenesis"/>
    <property type="evidence" value="ECO:0007669"/>
    <property type="project" value="UniProtKB-KW"/>
</dbReference>
<dbReference type="GO" id="GO:0007155">
    <property type="term" value="P:cell adhesion"/>
    <property type="evidence" value="ECO:0000314"/>
    <property type="project" value="UniProtKB"/>
</dbReference>
<dbReference type="GO" id="GO:0071474">
    <property type="term" value="P:cellular hyperosmotic response"/>
    <property type="evidence" value="ECO:0000314"/>
    <property type="project" value="UniProtKB"/>
</dbReference>
<dbReference type="GO" id="GO:0019835">
    <property type="term" value="P:cytolysis"/>
    <property type="evidence" value="ECO:0000314"/>
    <property type="project" value="UniProtKB"/>
</dbReference>
<dbReference type="GO" id="GO:0097707">
    <property type="term" value="P:ferroptosis"/>
    <property type="evidence" value="ECO:0000314"/>
    <property type="project" value="UniProtKB"/>
</dbReference>
<dbReference type="GO" id="GO:0034113">
    <property type="term" value="P:heterotypic cell-cell adhesion"/>
    <property type="evidence" value="ECO:0000315"/>
    <property type="project" value="UniProtKB"/>
</dbReference>
<dbReference type="GO" id="GO:1990384">
    <property type="term" value="P:hyaloid vascular plexus regression"/>
    <property type="evidence" value="ECO:0000315"/>
    <property type="project" value="MGI"/>
</dbReference>
<dbReference type="GO" id="GO:0006954">
    <property type="term" value="P:inflammatory response"/>
    <property type="evidence" value="ECO:0000315"/>
    <property type="project" value="UniProtKB"/>
</dbReference>
<dbReference type="GO" id="GO:0031640">
    <property type="term" value="P:killing of cells of another organism"/>
    <property type="evidence" value="ECO:0007669"/>
    <property type="project" value="UniProtKB-KW"/>
</dbReference>
<dbReference type="GO" id="GO:0002232">
    <property type="term" value="P:leukocyte chemotaxis involved in inflammatory response"/>
    <property type="evidence" value="ECO:0000314"/>
    <property type="project" value="UniProtKB"/>
</dbReference>
<dbReference type="GO" id="GO:0048246">
    <property type="term" value="P:macrophage chemotaxis"/>
    <property type="evidence" value="ECO:0000314"/>
    <property type="project" value="UniProtKB"/>
</dbReference>
<dbReference type="GO" id="GO:0042692">
    <property type="term" value="P:muscle cell differentiation"/>
    <property type="evidence" value="ECO:0000315"/>
    <property type="project" value="UniProtKB"/>
</dbReference>
<dbReference type="GO" id="GO:1905351">
    <property type="term" value="P:pericyte cell migration"/>
    <property type="evidence" value="ECO:0000315"/>
    <property type="project" value="UniProtKB"/>
</dbReference>
<dbReference type="GO" id="GO:0001954">
    <property type="term" value="P:positive regulation of cell-matrix adhesion"/>
    <property type="evidence" value="ECO:0000315"/>
    <property type="project" value="MGI"/>
</dbReference>
<dbReference type="GO" id="GO:0050729">
    <property type="term" value="P:positive regulation of inflammatory response"/>
    <property type="evidence" value="ECO:0000314"/>
    <property type="project" value="UniProtKB"/>
</dbReference>
<dbReference type="GO" id="GO:2001206">
    <property type="term" value="P:positive regulation of osteoclast development"/>
    <property type="evidence" value="ECO:0000315"/>
    <property type="project" value="UniProtKB"/>
</dbReference>
<dbReference type="GO" id="GO:0034145">
    <property type="term" value="P:positive regulation of toll-like receptor 4 signaling pathway"/>
    <property type="evidence" value="ECO:0000314"/>
    <property type="project" value="UniProtKB"/>
</dbReference>
<dbReference type="GO" id="GO:0097300">
    <property type="term" value="P:programmed necrotic cell death"/>
    <property type="evidence" value="ECO:0000314"/>
    <property type="project" value="UniProtKB"/>
</dbReference>
<dbReference type="GO" id="GO:0051260">
    <property type="term" value="P:protein homooligomerization"/>
    <property type="evidence" value="ECO:0000314"/>
    <property type="project" value="UniProtKB"/>
</dbReference>
<dbReference type="GO" id="GO:0141201">
    <property type="term" value="P:pyroptotic cell death"/>
    <property type="evidence" value="ECO:0000314"/>
    <property type="project" value="UniProtKB"/>
</dbReference>
<dbReference type="GO" id="GO:0045765">
    <property type="term" value="P:regulation of angiogenesis"/>
    <property type="evidence" value="ECO:0000315"/>
    <property type="project" value="UniProtKB"/>
</dbReference>
<dbReference type="GO" id="GO:0042246">
    <property type="term" value="P:tissue regeneration"/>
    <property type="evidence" value="ECO:0007669"/>
    <property type="project" value="InterPro"/>
</dbReference>
<dbReference type="InterPro" id="IPR007007">
    <property type="entry name" value="Ninjurin"/>
</dbReference>
<dbReference type="PANTHER" id="PTHR12316:SF19">
    <property type="entry name" value="NINJURIN-1"/>
    <property type="match status" value="1"/>
</dbReference>
<dbReference type="PANTHER" id="PTHR12316">
    <property type="entry name" value="NINJURIN-RELATED"/>
    <property type="match status" value="1"/>
</dbReference>
<dbReference type="Pfam" id="PF04923">
    <property type="entry name" value="Ninjurin"/>
    <property type="match status" value="1"/>
</dbReference>